<evidence type="ECO:0000256" key="1">
    <source>
        <dbReference type="SAM" id="MobiDB-lite"/>
    </source>
</evidence>
<evidence type="ECO:0000305" key="2"/>
<organism>
    <name type="scientific">Drosophila melanogaster</name>
    <name type="common">Fruit fly</name>
    <dbReference type="NCBI Taxonomy" id="7227"/>
    <lineage>
        <taxon>Eukaryota</taxon>
        <taxon>Metazoa</taxon>
        <taxon>Ecdysozoa</taxon>
        <taxon>Arthropoda</taxon>
        <taxon>Hexapoda</taxon>
        <taxon>Insecta</taxon>
        <taxon>Pterygota</taxon>
        <taxon>Neoptera</taxon>
        <taxon>Endopterygota</taxon>
        <taxon>Diptera</taxon>
        <taxon>Brachycera</taxon>
        <taxon>Muscomorpha</taxon>
        <taxon>Ephydroidea</taxon>
        <taxon>Drosophilidae</taxon>
        <taxon>Drosophila</taxon>
        <taxon>Sophophora</taxon>
    </lineage>
</organism>
<gene>
    <name type="primary">RpS5b</name>
    <name type="synonym">RpS5</name>
    <name type="ORF">CG7014</name>
</gene>
<accession>Q9VFE4</accession>
<protein>
    <recommendedName>
        <fullName evidence="2">Small ribosomal subunit protein uS7B</fullName>
    </recommendedName>
    <alternativeName>
        <fullName>40S ribosomal protein S5b</fullName>
    </alternativeName>
</protein>
<comment type="similarity">
    <text evidence="2">Belongs to the universal ribosomal protein uS7 family.</text>
</comment>
<keyword id="KW-0002">3D-structure</keyword>
<keyword id="KW-1185">Reference proteome</keyword>
<keyword id="KW-0687">Ribonucleoprotein</keyword>
<keyword id="KW-0689">Ribosomal protein</keyword>
<sequence length="230" mass="25716">MSEEVVESSSQEASQVIPQEQEDWADDVVTTMPAQEVTEWPEIKLFGRWACDDISISDISLQDYIAVKEKFARYLPHSAGRYAAKRFRKAQCPIVERLTSGLMMKGRSNGKKLLACRIVKHAFEIIHLLTSENPLQVTVNAIVNSGPREDSTRIGRAGTVRRQAVDVSPLRRVNQAIWLICTGAREAAFRNIKTVAECLADELINAAKGSSNSYAIKKKDELERVAKSNR</sequence>
<name>RS5B_DROME</name>
<reference key="1">
    <citation type="journal article" date="2000" name="Science">
        <title>The genome sequence of Drosophila melanogaster.</title>
        <authorList>
            <person name="Adams M.D."/>
            <person name="Celniker S.E."/>
            <person name="Holt R.A."/>
            <person name="Evans C.A."/>
            <person name="Gocayne J.D."/>
            <person name="Amanatides P.G."/>
            <person name="Scherer S.E."/>
            <person name="Li P.W."/>
            <person name="Hoskins R.A."/>
            <person name="Galle R.F."/>
            <person name="George R.A."/>
            <person name="Lewis S.E."/>
            <person name="Richards S."/>
            <person name="Ashburner M."/>
            <person name="Henderson S.N."/>
            <person name="Sutton G.G."/>
            <person name="Wortman J.R."/>
            <person name="Yandell M.D."/>
            <person name="Zhang Q."/>
            <person name="Chen L.X."/>
            <person name="Brandon R.C."/>
            <person name="Rogers Y.-H.C."/>
            <person name="Blazej R.G."/>
            <person name="Champe M."/>
            <person name="Pfeiffer B.D."/>
            <person name="Wan K.H."/>
            <person name="Doyle C."/>
            <person name="Baxter E.G."/>
            <person name="Helt G."/>
            <person name="Nelson C.R."/>
            <person name="Miklos G.L.G."/>
            <person name="Abril J.F."/>
            <person name="Agbayani A."/>
            <person name="An H.-J."/>
            <person name="Andrews-Pfannkoch C."/>
            <person name="Baldwin D."/>
            <person name="Ballew R.M."/>
            <person name="Basu A."/>
            <person name="Baxendale J."/>
            <person name="Bayraktaroglu L."/>
            <person name="Beasley E.M."/>
            <person name="Beeson K.Y."/>
            <person name="Benos P.V."/>
            <person name="Berman B.P."/>
            <person name="Bhandari D."/>
            <person name="Bolshakov S."/>
            <person name="Borkova D."/>
            <person name="Botchan M.R."/>
            <person name="Bouck J."/>
            <person name="Brokstein P."/>
            <person name="Brottier P."/>
            <person name="Burtis K.C."/>
            <person name="Busam D.A."/>
            <person name="Butler H."/>
            <person name="Cadieu E."/>
            <person name="Center A."/>
            <person name="Chandra I."/>
            <person name="Cherry J.M."/>
            <person name="Cawley S."/>
            <person name="Dahlke C."/>
            <person name="Davenport L.B."/>
            <person name="Davies P."/>
            <person name="de Pablos B."/>
            <person name="Delcher A."/>
            <person name="Deng Z."/>
            <person name="Mays A.D."/>
            <person name="Dew I."/>
            <person name="Dietz S.M."/>
            <person name="Dodson K."/>
            <person name="Doup L.E."/>
            <person name="Downes M."/>
            <person name="Dugan-Rocha S."/>
            <person name="Dunkov B.C."/>
            <person name="Dunn P."/>
            <person name="Durbin K.J."/>
            <person name="Evangelista C.C."/>
            <person name="Ferraz C."/>
            <person name="Ferriera S."/>
            <person name="Fleischmann W."/>
            <person name="Fosler C."/>
            <person name="Gabrielian A.E."/>
            <person name="Garg N.S."/>
            <person name="Gelbart W.M."/>
            <person name="Glasser K."/>
            <person name="Glodek A."/>
            <person name="Gong F."/>
            <person name="Gorrell J.H."/>
            <person name="Gu Z."/>
            <person name="Guan P."/>
            <person name="Harris M."/>
            <person name="Harris N.L."/>
            <person name="Harvey D.A."/>
            <person name="Heiman T.J."/>
            <person name="Hernandez J.R."/>
            <person name="Houck J."/>
            <person name="Hostin D."/>
            <person name="Houston K.A."/>
            <person name="Howland T.J."/>
            <person name="Wei M.-H."/>
            <person name="Ibegwam C."/>
            <person name="Jalali M."/>
            <person name="Kalush F."/>
            <person name="Karpen G.H."/>
            <person name="Ke Z."/>
            <person name="Kennison J.A."/>
            <person name="Ketchum K.A."/>
            <person name="Kimmel B.E."/>
            <person name="Kodira C.D."/>
            <person name="Kraft C.L."/>
            <person name="Kravitz S."/>
            <person name="Kulp D."/>
            <person name="Lai Z."/>
            <person name="Lasko P."/>
            <person name="Lei Y."/>
            <person name="Levitsky A.A."/>
            <person name="Li J.H."/>
            <person name="Li Z."/>
            <person name="Liang Y."/>
            <person name="Lin X."/>
            <person name="Liu X."/>
            <person name="Mattei B."/>
            <person name="McIntosh T.C."/>
            <person name="McLeod M.P."/>
            <person name="McPherson D."/>
            <person name="Merkulov G."/>
            <person name="Milshina N.V."/>
            <person name="Mobarry C."/>
            <person name="Morris J."/>
            <person name="Moshrefi A."/>
            <person name="Mount S.M."/>
            <person name="Moy M."/>
            <person name="Murphy B."/>
            <person name="Murphy L."/>
            <person name="Muzny D.M."/>
            <person name="Nelson D.L."/>
            <person name="Nelson D.R."/>
            <person name="Nelson K.A."/>
            <person name="Nixon K."/>
            <person name="Nusskern D.R."/>
            <person name="Pacleb J.M."/>
            <person name="Palazzolo M."/>
            <person name="Pittman G.S."/>
            <person name="Pan S."/>
            <person name="Pollard J."/>
            <person name="Puri V."/>
            <person name="Reese M.G."/>
            <person name="Reinert K."/>
            <person name="Remington K."/>
            <person name="Saunders R.D.C."/>
            <person name="Scheeler F."/>
            <person name="Shen H."/>
            <person name="Shue B.C."/>
            <person name="Siden-Kiamos I."/>
            <person name="Simpson M."/>
            <person name="Skupski M.P."/>
            <person name="Smith T.J."/>
            <person name="Spier E."/>
            <person name="Spradling A.C."/>
            <person name="Stapleton M."/>
            <person name="Strong R."/>
            <person name="Sun E."/>
            <person name="Svirskas R."/>
            <person name="Tector C."/>
            <person name="Turner R."/>
            <person name="Venter E."/>
            <person name="Wang A.H."/>
            <person name="Wang X."/>
            <person name="Wang Z.-Y."/>
            <person name="Wassarman D.A."/>
            <person name="Weinstock G.M."/>
            <person name="Weissenbach J."/>
            <person name="Williams S.M."/>
            <person name="Woodage T."/>
            <person name="Worley K.C."/>
            <person name="Wu D."/>
            <person name="Yang S."/>
            <person name="Yao Q.A."/>
            <person name="Ye J."/>
            <person name="Yeh R.-F."/>
            <person name="Zaveri J.S."/>
            <person name="Zhan M."/>
            <person name="Zhang G."/>
            <person name="Zhao Q."/>
            <person name="Zheng L."/>
            <person name="Zheng X.H."/>
            <person name="Zhong F.N."/>
            <person name="Zhong W."/>
            <person name="Zhou X."/>
            <person name="Zhu S.C."/>
            <person name="Zhu X."/>
            <person name="Smith H.O."/>
            <person name="Gibbs R.A."/>
            <person name="Myers E.W."/>
            <person name="Rubin G.M."/>
            <person name="Venter J.C."/>
        </authorList>
    </citation>
    <scope>NUCLEOTIDE SEQUENCE [LARGE SCALE GENOMIC DNA]</scope>
    <source>
        <strain>Berkeley</strain>
    </source>
</reference>
<reference key="2">
    <citation type="journal article" date="2002" name="Genome Biol.">
        <title>Annotation of the Drosophila melanogaster euchromatic genome: a systematic review.</title>
        <authorList>
            <person name="Misra S."/>
            <person name="Crosby M.A."/>
            <person name="Mungall C.J."/>
            <person name="Matthews B.B."/>
            <person name="Campbell K.S."/>
            <person name="Hradecky P."/>
            <person name="Huang Y."/>
            <person name="Kaminker J.S."/>
            <person name="Millburn G.H."/>
            <person name="Prochnik S.E."/>
            <person name="Smith C.D."/>
            <person name="Tupy J.L."/>
            <person name="Whitfield E.J."/>
            <person name="Bayraktaroglu L."/>
            <person name="Berman B.P."/>
            <person name="Bettencourt B.R."/>
            <person name="Celniker S.E."/>
            <person name="de Grey A.D.N.J."/>
            <person name="Drysdale R.A."/>
            <person name="Harris N.L."/>
            <person name="Richter J."/>
            <person name="Russo S."/>
            <person name="Schroeder A.J."/>
            <person name="Shu S.Q."/>
            <person name="Stapleton M."/>
            <person name="Yamada C."/>
            <person name="Ashburner M."/>
            <person name="Gelbart W.M."/>
            <person name="Rubin G.M."/>
            <person name="Lewis S.E."/>
        </authorList>
    </citation>
    <scope>GENOME REANNOTATION</scope>
    <source>
        <strain>Berkeley</strain>
    </source>
</reference>
<reference key="3">
    <citation type="journal article" date="2002" name="Genome Biol.">
        <title>A Drosophila full-length cDNA resource.</title>
        <authorList>
            <person name="Stapleton M."/>
            <person name="Carlson J.W."/>
            <person name="Brokstein P."/>
            <person name="Yu C."/>
            <person name="Champe M."/>
            <person name="George R.A."/>
            <person name="Guarin H."/>
            <person name="Kronmiller B."/>
            <person name="Pacleb J.M."/>
            <person name="Park S."/>
            <person name="Wan K.H."/>
            <person name="Rubin G.M."/>
            <person name="Celniker S.E."/>
        </authorList>
    </citation>
    <scope>NUCLEOTIDE SEQUENCE [LARGE SCALE MRNA]</scope>
    <source>
        <strain>Berkeley</strain>
        <tissue>Embryo</tissue>
    </source>
</reference>
<dbReference type="EMBL" id="AE014297">
    <property type="protein sequence ID" value="AAF55116.1"/>
    <property type="molecule type" value="Genomic_DNA"/>
</dbReference>
<dbReference type="EMBL" id="AY071138">
    <property type="protein sequence ID" value="AAL48760.1"/>
    <property type="molecule type" value="mRNA"/>
</dbReference>
<dbReference type="RefSeq" id="NP_650407.1">
    <property type="nucleotide sequence ID" value="NM_142150.3"/>
</dbReference>
<dbReference type="PDB" id="6XU8">
    <property type="method" value="EM"/>
    <property type="resolution" value="3.00 A"/>
    <property type="chains" value="AF=42-230"/>
</dbReference>
<dbReference type="PDBsum" id="6XU8"/>
<dbReference type="EMDB" id="EMD-10624"/>
<dbReference type="SMR" id="Q9VFE4"/>
<dbReference type="BioGRID" id="66877">
    <property type="interactions" value="12"/>
</dbReference>
<dbReference type="DIP" id="DIP-23034N"/>
<dbReference type="FunCoup" id="Q9VFE4">
    <property type="interactions" value="1122"/>
</dbReference>
<dbReference type="IntAct" id="Q9VFE4">
    <property type="interactions" value="18"/>
</dbReference>
<dbReference type="MINT" id="Q9VFE4"/>
<dbReference type="STRING" id="7227.FBpp0082465"/>
<dbReference type="PaxDb" id="7227-FBpp0082465"/>
<dbReference type="DNASU" id="41807"/>
<dbReference type="EnsemblMetazoa" id="FBtr0083006">
    <property type="protein sequence ID" value="FBpp0082465"/>
    <property type="gene ID" value="FBgn0038277"/>
</dbReference>
<dbReference type="GeneID" id="41807"/>
<dbReference type="KEGG" id="dme:Dmel_CG7014"/>
<dbReference type="AGR" id="FB:FBgn0038277"/>
<dbReference type="CTD" id="41807"/>
<dbReference type="FlyBase" id="FBgn0038277">
    <property type="gene designation" value="RpS5b"/>
</dbReference>
<dbReference type="VEuPathDB" id="VectorBase:FBgn0038277"/>
<dbReference type="eggNOG" id="KOG3291">
    <property type="taxonomic scope" value="Eukaryota"/>
</dbReference>
<dbReference type="GeneTree" id="ENSGT00390000010806"/>
<dbReference type="HOGENOM" id="CLU_063975_0_0_1"/>
<dbReference type="InParanoid" id="Q9VFE4"/>
<dbReference type="OMA" id="QANEWPE"/>
<dbReference type="OrthoDB" id="10264639at2759"/>
<dbReference type="PhylomeDB" id="Q9VFE4"/>
<dbReference type="SignaLink" id="Q9VFE4"/>
<dbReference type="BioGRID-ORCS" id="41807">
    <property type="hits" value="0 hits in 1 CRISPR screen"/>
</dbReference>
<dbReference type="ChiTaRS" id="RpS5a">
    <property type="organism name" value="fly"/>
</dbReference>
<dbReference type="GenomeRNAi" id="41807"/>
<dbReference type="PRO" id="PR:Q9VFE4"/>
<dbReference type="Proteomes" id="UP000000803">
    <property type="component" value="Chromosome 3R"/>
</dbReference>
<dbReference type="Bgee" id="FBgn0038277">
    <property type="expression patterns" value="Expressed in egg chamber and 83 other cell types or tissues"/>
</dbReference>
<dbReference type="ExpressionAtlas" id="Q9VFE4">
    <property type="expression patterns" value="baseline and differential"/>
</dbReference>
<dbReference type="GO" id="GO:0022627">
    <property type="term" value="C:cytosolic small ribosomal subunit"/>
    <property type="evidence" value="ECO:0000318"/>
    <property type="project" value="GO_Central"/>
</dbReference>
<dbReference type="GO" id="GO:0005840">
    <property type="term" value="C:ribosome"/>
    <property type="evidence" value="ECO:0000318"/>
    <property type="project" value="GO_Central"/>
</dbReference>
<dbReference type="GO" id="GO:0003729">
    <property type="term" value="F:mRNA binding"/>
    <property type="evidence" value="ECO:0000318"/>
    <property type="project" value="GO_Central"/>
</dbReference>
<dbReference type="GO" id="GO:0019843">
    <property type="term" value="F:rRNA binding"/>
    <property type="evidence" value="ECO:0000318"/>
    <property type="project" value="GO_Central"/>
</dbReference>
<dbReference type="GO" id="GO:0003735">
    <property type="term" value="F:structural constituent of ribosome"/>
    <property type="evidence" value="ECO:0000318"/>
    <property type="project" value="GO_Central"/>
</dbReference>
<dbReference type="GO" id="GO:0002181">
    <property type="term" value="P:cytoplasmic translation"/>
    <property type="evidence" value="ECO:0000304"/>
    <property type="project" value="FlyBase"/>
</dbReference>
<dbReference type="GO" id="GO:0000028">
    <property type="term" value="P:ribosomal small subunit assembly"/>
    <property type="evidence" value="ECO:0000318"/>
    <property type="project" value="GO_Central"/>
</dbReference>
<dbReference type="GO" id="GO:0006412">
    <property type="term" value="P:translation"/>
    <property type="evidence" value="ECO:0000318"/>
    <property type="project" value="GO_Central"/>
</dbReference>
<dbReference type="CDD" id="cd14867">
    <property type="entry name" value="uS7_Eukaryote"/>
    <property type="match status" value="1"/>
</dbReference>
<dbReference type="FunFam" id="1.10.455.10:FF:000002">
    <property type="entry name" value="40S ribosomal protein S5"/>
    <property type="match status" value="1"/>
</dbReference>
<dbReference type="Gene3D" id="1.10.455.10">
    <property type="entry name" value="Ribosomal protein S7 domain"/>
    <property type="match status" value="1"/>
</dbReference>
<dbReference type="InterPro" id="IPR000235">
    <property type="entry name" value="Ribosomal_uS7"/>
</dbReference>
<dbReference type="InterPro" id="IPR020606">
    <property type="entry name" value="Ribosomal_uS7_CS"/>
</dbReference>
<dbReference type="InterPro" id="IPR023798">
    <property type="entry name" value="Ribosomal_uS7_dom"/>
</dbReference>
<dbReference type="InterPro" id="IPR036823">
    <property type="entry name" value="Ribosomal_uS7_dom_sf"/>
</dbReference>
<dbReference type="InterPro" id="IPR005716">
    <property type="entry name" value="Ribosomal_uS7_euk/arc"/>
</dbReference>
<dbReference type="NCBIfam" id="NF003106">
    <property type="entry name" value="PRK04027.1"/>
    <property type="match status" value="1"/>
</dbReference>
<dbReference type="NCBIfam" id="TIGR01028">
    <property type="entry name" value="uS7_euk_arch"/>
    <property type="match status" value="1"/>
</dbReference>
<dbReference type="PANTHER" id="PTHR11205">
    <property type="entry name" value="RIBOSOMAL PROTEIN S7"/>
    <property type="match status" value="1"/>
</dbReference>
<dbReference type="Pfam" id="PF00177">
    <property type="entry name" value="Ribosomal_S7"/>
    <property type="match status" value="1"/>
</dbReference>
<dbReference type="PIRSF" id="PIRSF002122">
    <property type="entry name" value="RPS7p_RPS7a_RPS5e_RPS7o"/>
    <property type="match status" value="1"/>
</dbReference>
<dbReference type="SUPFAM" id="SSF47973">
    <property type="entry name" value="Ribosomal protein S7"/>
    <property type="match status" value="1"/>
</dbReference>
<dbReference type="PROSITE" id="PS00052">
    <property type="entry name" value="RIBOSOMAL_S7"/>
    <property type="match status" value="1"/>
</dbReference>
<proteinExistence type="evidence at protein level"/>
<feature type="chain" id="PRO_0000124531" description="Small ribosomal subunit protein uS7B">
    <location>
        <begin position="1"/>
        <end position="230"/>
    </location>
</feature>
<feature type="region of interest" description="Disordered" evidence="1">
    <location>
        <begin position="1"/>
        <end position="22"/>
    </location>
</feature>
<feature type="compositionally biased region" description="Low complexity" evidence="1">
    <location>
        <begin position="7"/>
        <end position="16"/>
    </location>
</feature>